<comment type="function">
    <text evidence="1">Part of the ABC transporter complex MetNIQ involved in methionine import. Responsible for energy coupling to the transport system.</text>
</comment>
<comment type="catalytic activity">
    <reaction evidence="1">
        <text>L-methionine(out) + ATP + H2O = L-methionine(in) + ADP + phosphate + H(+)</text>
        <dbReference type="Rhea" id="RHEA:29779"/>
        <dbReference type="ChEBI" id="CHEBI:15377"/>
        <dbReference type="ChEBI" id="CHEBI:15378"/>
        <dbReference type="ChEBI" id="CHEBI:30616"/>
        <dbReference type="ChEBI" id="CHEBI:43474"/>
        <dbReference type="ChEBI" id="CHEBI:57844"/>
        <dbReference type="ChEBI" id="CHEBI:456216"/>
        <dbReference type="EC" id="7.4.2.11"/>
    </reaction>
</comment>
<comment type="catalytic activity">
    <reaction evidence="1">
        <text>D-methionine(out) + ATP + H2O = D-methionine(in) + ADP + phosphate + H(+)</text>
        <dbReference type="Rhea" id="RHEA:29767"/>
        <dbReference type="ChEBI" id="CHEBI:15377"/>
        <dbReference type="ChEBI" id="CHEBI:15378"/>
        <dbReference type="ChEBI" id="CHEBI:30616"/>
        <dbReference type="ChEBI" id="CHEBI:43474"/>
        <dbReference type="ChEBI" id="CHEBI:57932"/>
        <dbReference type="ChEBI" id="CHEBI:456216"/>
        <dbReference type="EC" id="7.4.2.11"/>
    </reaction>
</comment>
<comment type="subunit">
    <text evidence="1">The complex is composed of two ATP-binding proteins (MetN), two transmembrane proteins (MetI) and a solute-binding protein (MetQ).</text>
</comment>
<comment type="subcellular location">
    <subcellularLocation>
        <location evidence="1">Cell membrane</location>
        <topology evidence="1">Peripheral membrane protein</topology>
    </subcellularLocation>
</comment>
<comment type="similarity">
    <text evidence="1">Belongs to the ABC transporter superfamily. Methionine importer (TC 3.A.1.24) family.</text>
</comment>
<accession>Q5YRD1</accession>
<reference key="1">
    <citation type="journal article" date="2004" name="Proc. Natl. Acad. Sci. U.S.A.">
        <title>The complete genomic sequence of Nocardia farcinica IFM 10152.</title>
        <authorList>
            <person name="Ishikawa J."/>
            <person name="Yamashita A."/>
            <person name="Mikami Y."/>
            <person name="Hoshino Y."/>
            <person name="Kurita H."/>
            <person name="Hotta K."/>
            <person name="Shiba T."/>
            <person name="Hattori M."/>
        </authorList>
    </citation>
    <scope>NUCLEOTIDE SEQUENCE [LARGE SCALE GENOMIC DNA]</scope>
    <source>
        <strain>IFM 10152</strain>
    </source>
</reference>
<gene>
    <name evidence="1" type="primary">metN</name>
    <name type="ordered locus">NFA_44090</name>
</gene>
<name>METN_NOCFA</name>
<dbReference type="EC" id="7.4.2.11" evidence="1"/>
<dbReference type="EMBL" id="AP006618">
    <property type="protein sequence ID" value="BAD59260.1"/>
    <property type="molecule type" value="Genomic_DNA"/>
</dbReference>
<dbReference type="RefSeq" id="WP_011210945.1">
    <property type="nucleotide sequence ID" value="NC_006361.1"/>
</dbReference>
<dbReference type="SMR" id="Q5YRD1"/>
<dbReference type="STRING" id="247156.NFA_44090"/>
<dbReference type="GeneID" id="61135030"/>
<dbReference type="KEGG" id="nfa:NFA_44090"/>
<dbReference type="eggNOG" id="COG1135">
    <property type="taxonomic scope" value="Bacteria"/>
</dbReference>
<dbReference type="HOGENOM" id="CLU_000604_1_3_11"/>
<dbReference type="OrthoDB" id="4398079at2"/>
<dbReference type="Proteomes" id="UP000006820">
    <property type="component" value="Chromosome"/>
</dbReference>
<dbReference type="GO" id="GO:0005886">
    <property type="term" value="C:plasma membrane"/>
    <property type="evidence" value="ECO:0007669"/>
    <property type="project" value="UniProtKB-SubCell"/>
</dbReference>
<dbReference type="GO" id="GO:0033232">
    <property type="term" value="F:ABC-type D-methionine transporter activity"/>
    <property type="evidence" value="ECO:0007669"/>
    <property type="project" value="UniProtKB-EC"/>
</dbReference>
<dbReference type="GO" id="GO:0005524">
    <property type="term" value="F:ATP binding"/>
    <property type="evidence" value="ECO:0007669"/>
    <property type="project" value="UniProtKB-KW"/>
</dbReference>
<dbReference type="GO" id="GO:0016887">
    <property type="term" value="F:ATP hydrolysis activity"/>
    <property type="evidence" value="ECO:0007669"/>
    <property type="project" value="InterPro"/>
</dbReference>
<dbReference type="CDD" id="cd03258">
    <property type="entry name" value="ABC_MetN_methionine_transporter"/>
    <property type="match status" value="1"/>
</dbReference>
<dbReference type="FunFam" id="3.40.50.300:FF:000056">
    <property type="entry name" value="Cell division ATP-binding protein FtsE"/>
    <property type="match status" value="1"/>
</dbReference>
<dbReference type="Gene3D" id="3.30.70.260">
    <property type="match status" value="1"/>
</dbReference>
<dbReference type="Gene3D" id="3.40.50.300">
    <property type="entry name" value="P-loop containing nucleotide triphosphate hydrolases"/>
    <property type="match status" value="1"/>
</dbReference>
<dbReference type="InterPro" id="IPR003593">
    <property type="entry name" value="AAA+_ATPase"/>
</dbReference>
<dbReference type="InterPro" id="IPR003439">
    <property type="entry name" value="ABC_transporter-like_ATP-bd"/>
</dbReference>
<dbReference type="InterPro" id="IPR017871">
    <property type="entry name" value="ABC_transporter-like_CS"/>
</dbReference>
<dbReference type="InterPro" id="IPR045865">
    <property type="entry name" value="ACT-like_dom_sf"/>
</dbReference>
<dbReference type="InterPro" id="IPR041701">
    <property type="entry name" value="MetN_ABC"/>
</dbReference>
<dbReference type="InterPro" id="IPR050086">
    <property type="entry name" value="MetN_ABC_transporter-like"/>
</dbReference>
<dbReference type="InterPro" id="IPR018449">
    <property type="entry name" value="NIL_domain"/>
</dbReference>
<dbReference type="InterPro" id="IPR027417">
    <property type="entry name" value="P-loop_NTPase"/>
</dbReference>
<dbReference type="PANTHER" id="PTHR43166">
    <property type="entry name" value="AMINO ACID IMPORT ATP-BINDING PROTEIN"/>
    <property type="match status" value="1"/>
</dbReference>
<dbReference type="PANTHER" id="PTHR43166:SF30">
    <property type="entry name" value="METHIONINE IMPORT ATP-BINDING PROTEIN METN"/>
    <property type="match status" value="1"/>
</dbReference>
<dbReference type="Pfam" id="PF00005">
    <property type="entry name" value="ABC_tran"/>
    <property type="match status" value="1"/>
</dbReference>
<dbReference type="Pfam" id="PF09383">
    <property type="entry name" value="NIL"/>
    <property type="match status" value="1"/>
</dbReference>
<dbReference type="SMART" id="SM00382">
    <property type="entry name" value="AAA"/>
    <property type="match status" value="1"/>
</dbReference>
<dbReference type="SUPFAM" id="SSF55021">
    <property type="entry name" value="ACT-like"/>
    <property type="match status" value="1"/>
</dbReference>
<dbReference type="SUPFAM" id="SSF52540">
    <property type="entry name" value="P-loop containing nucleoside triphosphate hydrolases"/>
    <property type="match status" value="1"/>
</dbReference>
<dbReference type="PROSITE" id="PS00211">
    <property type="entry name" value="ABC_TRANSPORTER_1"/>
    <property type="match status" value="1"/>
</dbReference>
<dbReference type="PROSITE" id="PS50893">
    <property type="entry name" value="ABC_TRANSPORTER_2"/>
    <property type="match status" value="1"/>
</dbReference>
<dbReference type="PROSITE" id="PS51264">
    <property type="entry name" value="METN"/>
    <property type="match status" value="1"/>
</dbReference>
<sequence>MSDAPAVEFRSVSKVFRTGKREHTVLHEIDLRIERGEILGVIGYSGAGKSTLARLINGLEKPTAGTIEVAGTPITGVPEARVRQLRRDIGMIFQQFNLFRSRTAAGNIEYPLKVAGWPRAKRKARVAELLEFVGLTDKARSYPDQLSGGQKQRVGIARALATSPALLLADEATSALDPETTGEVLALLRKINTELGVTIVVITHEMDVIRAVADRVAVLADGRIVELASTFDVFAAPRSAPARAFVDTVLHNRPAPEELRRLDALHTGRLVTVDVDDKRGIGAALTTAARAGVRFEVVYGGVSTLQDKTFGSITLALDGPDDAVAAVLAALDER</sequence>
<feature type="chain" id="PRO_0000270335" description="Methionine import ATP-binding protein MetN">
    <location>
        <begin position="1"/>
        <end position="334"/>
    </location>
</feature>
<feature type="domain" description="ABC transporter" evidence="1">
    <location>
        <begin position="7"/>
        <end position="246"/>
    </location>
</feature>
<feature type="binding site" evidence="1">
    <location>
        <begin position="43"/>
        <end position="50"/>
    </location>
    <ligand>
        <name>ATP</name>
        <dbReference type="ChEBI" id="CHEBI:30616"/>
    </ligand>
</feature>
<protein>
    <recommendedName>
        <fullName evidence="1">Methionine import ATP-binding protein MetN</fullName>
        <ecNumber evidence="1">7.4.2.11</ecNumber>
    </recommendedName>
</protein>
<organism>
    <name type="scientific">Nocardia farcinica (strain IFM 10152)</name>
    <dbReference type="NCBI Taxonomy" id="247156"/>
    <lineage>
        <taxon>Bacteria</taxon>
        <taxon>Bacillati</taxon>
        <taxon>Actinomycetota</taxon>
        <taxon>Actinomycetes</taxon>
        <taxon>Mycobacteriales</taxon>
        <taxon>Nocardiaceae</taxon>
        <taxon>Nocardia</taxon>
    </lineage>
</organism>
<keyword id="KW-0029">Amino-acid transport</keyword>
<keyword id="KW-0067">ATP-binding</keyword>
<keyword id="KW-1003">Cell membrane</keyword>
<keyword id="KW-0472">Membrane</keyword>
<keyword id="KW-0547">Nucleotide-binding</keyword>
<keyword id="KW-1185">Reference proteome</keyword>
<keyword id="KW-1278">Translocase</keyword>
<keyword id="KW-0813">Transport</keyword>
<evidence type="ECO:0000255" key="1">
    <source>
        <dbReference type="HAMAP-Rule" id="MF_01719"/>
    </source>
</evidence>
<proteinExistence type="inferred from homology"/>